<keyword id="KW-1003">Cell membrane</keyword>
<keyword id="KW-0472">Membrane</keyword>
<keyword id="KW-0614">Plasmid</keyword>
<keyword id="KW-1185">Reference proteome</keyword>
<keyword id="KW-0812">Transmembrane</keyword>
<keyword id="KW-1133">Transmembrane helix</keyword>
<feature type="chain" id="PRO_0000216841" description="Uncharacterized protein pXO2-23/BXB0022/GBAA_pXO2_0022">
    <location>
        <begin position="1"/>
        <end position="277"/>
    </location>
</feature>
<feature type="transmembrane region" description="Helical" evidence="1">
    <location>
        <begin position="37"/>
        <end position="59"/>
    </location>
</feature>
<feature type="transmembrane region" description="Helical" evidence="1">
    <location>
        <begin position="63"/>
        <end position="82"/>
    </location>
</feature>
<feature type="transmembrane region" description="Helical" evidence="1">
    <location>
        <begin position="214"/>
        <end position="236"/>
    </location>
</feature>
<feature type="transmembrane region" description="Helical" evidence="1">
    <location>
        <begin position="246"/>
        <end position="268"/>
    </location>
</feature>
<geneLocation type="plasmid">
    <name>pXO2</name>
</geneLocation>
<name>Y6522_BACAN</name>
<proteinExistence type="predicted"/>
<evidence type="ECO:0000255" key="1"/>
<evidence type="ECO:0000305" key="2"/>
<protein>
    <recommendedName>
        <fullName>Uncharacterized protein pXO2-23/BXB0022/GBAA_pXO2_0022</fullName>
    </recommendedName>
</protein>
<dbReference type="EMBL" id="AF188935">
    <property type="protein sequence ID" value="AAF13628.1"/>
    <property type="status" value="ALT_FRAME"/>
    <property type="molecule type" value="Genomic_DNA"/>
</dbReference>
<dbReference type="EMBL" id="AF188935">
    <property type="protein sequence ID" value="AAF13629.1"/>
    <property type="status" value="ALT_FRAME"/>
    <property type="molecule type" value="Genomic_DNA"/>
</dbReference>
<dbReference type="EMBL" id="AE011191">
    <property type="protein sequence ID" value="AAM26182.1"/>
    <property type="molecule type" value="Genomic_DNA"/>
</dbReference>
<dbReference type="EMBL" id="AE017335">
    <property type="protein sequence ID" value="AAT28952.2"/>
    <property type="molecule type" value="Genomic_DNA"/>
</dbReference>
<dbReference type="RefSeq" id="NP_053178.1">
    <property type="nucleotide sequence ID" value="NC_002146.1"/>
</dbReference>
<dbReference type="RefSeq" id="NP_053179.1">
    <property type="nucleotide sequence ID" value="NC_002146.1"/>
</dbReference>
<dbReference type="RefSeq" id="WP_000704110.1">
    <property type="nucleotide sequence ID" value="NZ_VTZL01000009.1"/>
</dbReference>
<dbReference type="TCDB" id="3.A.7.13.1">
    <property type="family name" value="the type iv (conjugal dna-protein transfer or virb) secretory pathway (ivsp) family"/>
</dbReference>
<dbReference type="GeneID" id="45025335"/>
<dbReference type="KEGG" id="bar:GBAA_pXO2_0022"/>
<dbReference type="HOGENOM" id="CLU_1003455_0_0_9"/>
<dbReference type="OMA" id="ISACAQY"/>
<dbReference type="Proteomes" id="UP000000594">
    <property type="component" value="Plasmid pXO2"/>
</dbReference>
<dbReference type="GO" id="GO:0005886">
    <property type="term" value="C:plasma membrane"/>
    <property type="evidence" value="ECO:0007669"/>
    <property type="project" value="UniProtKB-SubCell"/>
</dbReference>
<sequence length="277" mass="32157">MKISTFNAKTKKKKFVNAEEINAFKVAYGKPLNRKDYLRYAIIPGLVTGVFSFLLLYIWWLSLIFGLMGSVYGLKVLMPKVIKRAYERDSFRERNKFVNNMTSLLANDSQTLLTSLQRASDRSQGELRADLKILLASVMGADQEQVLQAFKQMSNKYRDDITFDQYLEQLETCVLEGRTNLETLKDIKTHHNEMKEKKDDYERKKEGHLKDMKMLCGVIVVFVLAITFSFGFKTYITAFARHPIGWITSGIYMTLMCFFFKSFTTYLFDDSIMEVKA</sequence>
<organism>
    <name type="scientific">Bacillus anthracis</name>
    <dbReference type="NCBI Taxonomy" id="1392"/>
    <lineage>
        <taxon>Bacteria</taxon>
        <taxon>Bacillati</taxon>
        <taxon>Bacillota</taxon>
        <taxon>Bacilli</taxon>
        <taxon>Bacillales</taxon>
        <taxon>Bacillaceae</taxon>
        <taxon>Bacillus</taxon>
        <taxon>Bacillus cereus group</taxon>
    </lineage>
</organism>
<gene>
    <name type="ordered locus">pXO2-23/pXO2-24</name>
    <name type="ordered locus">BXB0022</name>
    <name type="ordered locus">GBAA_pXO2_0022</name>
</gene>
<comment type="subcellular location">
    <subcellularLocation>
        <location evidence="2">Cell membrane</location>
        <topology evidence="2">Multi-pass membrane protein</topology>
    </subcellularLocation>
</comment>
<comment type="sequence caution" evidence="2">
    <conflict type="frameshift">
        <sequence resource="EMBL-CDS" id="AAF13629"/>
    </conflict>
</comment>
<accession>Q9RN08</accession>
<accession>Q8KYG2</accession>
<accession>Q9RN09</accession>
<reference key="1">
    <citation type="journal article" date="1999" name="J. Appl. Microbiol.">
        <title>Sequence, assembly and analysis of pXO1 and pXO2.</title>
        <authorList>
            <person name="Okinaka R.T."/>
            <person name="Cloud K."/>
            <person name="Hampton O."/>
            <person name="Hoffmaster A."/>
            <person name="Hill K.K."/>
            <person name="Keim P."/>
            <person name="Koehler T."/>
            <person name="Lamke G."/>
            <person name="Kumano S."/>
            <person name="Manter D."/>
            <person name="Martinez Y."/>
            <person name="Ricke D."/>
            <person name="Svensson R."/>
            <person name="Jackson P.J."/>
        </authorList>
    </citation>
    <scope>NUCLEOTIDE SEQUENCE [GENOMIC DNA]</scope>
    <source>
        <strain>Pasteur</strain>
    </source>
</reference>
<reference key="2">
    <citation type="journal article" date="2002" name="Science">
        <title>Comparative genome sequencing for discovery of novel polymorphisms in Bacillus anthracis.</title>
        <authorList>
            <person name="Read T.D."/>
            <person name="Salzberg S.L."/>
            <person name="Pop M."/>
            <person name="Shumway M.F."/>
            <person name="Umayam L."/>
            <person name="Jiang L."/>
            <person name="Holtzapple E."/>
            <person name="Busch J.D."/>
            <person name="Smith K.L."/>
            <person name="Schupp J.M."/>
            <person name="Solomon D."/>
            <person name="Keim P."/>
            <person name="Fraser C.M."/>
        </authorList>
    </citation>
    <scope>NUCLEOTIDE SEQUENCE [GENOMIC DNA]</scope>
    <source>
        <strain>Ames / isolate Florida / A2012</strain>
    </source>
</reference>
<reference key="3">
    <citation type="journal article" date="2009" name="J. Bacteriol.">
        <title>The complete genome sequence of Bacillus anthracis Ames 'Ancestor'.</title>
        <authorList>
            <person name="Ravel J."/>
            <person name="Jiang L."/>
            <person name="Stanley S.T."/>
            <person name="Wilson M.R."/>
            <person name="Decker R.S."/>
            <person name="Read T.D."/>
            <person name="Worsham P."/>
            <person name="Keim P.S."/>
            <person name="Salzberg S.L."/>
            <person name="Fraser-Liggett C.M."/>
            <person name="Rasko D.A."/>
        </authorList>
    </citation>
    <scope>NUCLEOTIDE SEQUENCE [LARGE SCALE GENOMIC DNA]</scope>
    <source>
        <strain>Ames ancestor</strain>
    </source>
</reference>